<keyword id="KW-0963">Cytoplasm</keyword>
<keyword id="KW-0378">Hydrolase</keyword>
<keyword id="KW-0520">NAD</keyword>
<keyword id="KW-0554">One-carbon metabolism</keyword>
<keyword id="KW-1185">Reference proteome</keyword>
<gene>
    <name type="ordered locus">MTH_1636</name>
</gene>
<proteinExistence type="inferred from homology"/>
<protein>
    <recommendedName>
        <fullName evidence="1">S-inosyl-L-homocysteine hydrolase</fullName>
        <shortName evidence="1">SIHH</shortName>
        <ecNumber evidence="1">3.13.1.9</ecNumber>
    </recommendedName>
</protein>
<evidence type="ECO:0000255" key="1">
    <source>
        <dbReference type="HAMAP-Rule" id="MF_00563"/>
    </source>
</evidence>
<sequence>MPYKVKDISLAPQGEKKIRWVQEHMPVLERIKSDFSEEKPFKGVTIGSCLHLEPKTINLGLTLQAGGAEVAMTGCNPLSTQDDATAAGAKMGLNMYGWRGETNEEYYENIHRVLDHEPEILIDDGADMIFLVHRERPELLDGIIGACEETTTGINRLRAMAADGALKFPVMAVNDAYTKYLFDNRYGTGQSTFDSIMGTTNMLIAGKTVVVCGYGWCGRGIAMRAEGLGASVIVTEVDPIRALEARMDGFRVMKVSDAVKEADILITATGNTDVVSESEFMNMKDGCVMANSGHFNVEINREALEELSRETGKVKEDIEVFIMPDGRKIYLLAEGRLVNLASERGQGHPAEIMDMSFAMQALSARHLLQEKPDPGVYRAPDEIDLMVARMKLDAMGIEIDELTEKQRLYLENWEEGT</sequence>
<dbReference type="EC" id="3.13.1.9" evidence="1"/>
<dbReference type="EMBL" id="AE000666">
    <property type="protein sequence ID" value="AAB86109.1"/>
    <property type="molecule type" value="Genomic_DNA"/>
</dbReference>
<dbReference type="PIR" id="F69085">
    <property type="entry name" value="F69085"/>
</dbReference>
<dbReference type="RefSeq" id="WP_010877244.1">
    <property type="nucleotide sequence ID" value="NC_000916.1"/>
</dbReference>
<dbReference type="SMR" id="O27673"/>
<dbReference type="FunCoup" id="O27673">
    <property type="interactions" value="124"/>
</dbReference>
<dbReference type="STRING" id="187420.MTH_1636"/>
<dbReference type="PaxDb" id="187420-MTH_1636"/>
<dbReference type="EnsemblBacteria" id="AAB86109">
    <property type="protein sequence ID" value="AAB86109"/>
    <property type="gene ID" value="MTH_1636"/>
</dbReference>
<dbReference type="GeneID" id="1470721"/>
<dbReference type="KEGG" id="mth:MTH_1636"/>
<dbReference type="PATRIC" id="fig|187420.15.peg.1600"/>
<dbReference type="HOGENOM" id="CLU_025194_2_1_2"/>
<dbReference type="InParanoid" id="O27673"/>
<dbReference type="UniPathway" id="UPA00315"/>
<dbReference type="Proteomes" id="UP000005223">
    <property type="component" value="Chromosome"/>
</dbReference>
<dbReference type="GO" id="GO:0005829">
    <property type="term" value="C:cytosol"/>
    <property type="evidence" value="ECO:0007669"/>
    <property type="project" value="TreeGrafter"/>
</dbReference>
<dbReference type="GO" id="GO:0004013">
    <property type="term" value="F:adenosylhomocysteinase activity"/>
    <property type="evidence" value="ECO:0007669"/>
    <property type="project" value="TreeGrafter"/>
</dbReference>
<dbReference type="GO" id="GO:0016802">
    <property type="term" value="F:trialkylsulfonium hydrolase activity"/>
    <property type="evidence" value="ECO:0007669"/>
    <property type="project" value="UniProtKB-UniRule"/>
</dbReference>
<dbReference type="GO" id="GO:0006730">
    <property type="term" value="P:one-carbon metabolic process"/>
    <property type="evidence" value="ECO:0007669"/>
    <property type="project" value="UniProtKB-KW"/>
</dbReference>
<dbReference type="GO" id="GO:0006556">
    <property type="term" value="P:S-adenosylmethionine biosynthetic process"/>
    <property type="evidence" value="ECO:0007669"/>
    <property type="project" value="UniProtKB-UniRule"/>
</dbReference>
<dbReference type="GO" id="GO:0033353">
    <property type="term" value="P:S-adenosylmethionine cycle"/>
    <property type="evidence" value="ECO:0007669"/>
    <property type="project" value="TreeGrafter"/>
</dbReference>
<dbReference type="CDD" id="cd00401">
    <property type="entry name" value="SAHH"/>
    <property type="match status" value="1"/>
</dbReference>
<dbReference type="FunFam" id="3.40.50.720:FF:000004">
    <property type="entry name" value="Adenosylhomocysteinase"/>
    <property type="match status" value="1"/>
</dbReference>
<dbReference type="Gene3D" id="3.40.50.1480">
    <property type="entry name" value="Adenosylhomocysteinase-like"/>
    <property type="match status" value="1"/>
</dbReference>
<dbReference type="Gene3D" id="3.40.50.720">
    <property type="entry name" value="NAD(P)-binding Rossmann-like Domain"/>
    <property type="match status" value="1"/>
</dbReference>
<dbReference type="HAMAP" id="MF_00563">
    <property type="entry name" value="AdoHcyase"/>
    <property type="match status" value="1"/>
</dbReference>
<dbReference type="InterPro" id="IPR042172">
    <property type="entry name" value="Adenosylhomocyst_ase-like_sf"/>
</dbReference>
<dbReference type="InterPro" id="IPR000043">
    <property type="entry name" value="Adenosylhomocysteinase-like"/>
</dbReference>
<dbReference type="InterPro" id="IPR015878">
    <property type="entry name" value="Ado_hCys_hydrolase_NAD-bd"/>
</dbReference>
<dbReference type="InterPro" id="IPR036291">
    <property type="entry name" value="NAD(P)-bd_dom_sf"/>
</dbReference>
<dbReference type="InterPro" id="IPR020082">
    <property type="entry name" value="S-Ado-L-homoCys_hydrolase_CS"/>
</dbReference>
<dbReference type="NCBIfam" id="TIGR00936">
    <property type="entry name" value="ahcY"/>
    <property type="match status" value="1"/>
</dbReference>
<dbReference type="NCBIfam" id="NF004005">
    <property type="entry name" value="PRK05476.2-3"/>
    <property type="match status" value="1"/>
</dbReference>
<dbReference type="PANTHER" id="PTHR23420">
    <property type="entry name" value="ADENOSYLHOMOCYSTEINASE"/>
    <property type="match status" value="1"/>
</dbReference>
<dbReference type="PANTHER" id="PTHR23420:SF0">
    <property type="entry name" value="ADENOSYLHOMOCYSTEINASE"/>
    <property type="match status" value="1"/>
</dbReference>
<dbReference type="Pfam" id="PF05221">
    <property type="entry name" value="AdoHcyase"/>
    <property type="match status" value="2"/>
</dbReference>
<dbReference type="Pfam" id="PF00670">
    <property type="entry name" value="AdoHcyase_NAD"/>
    <property type="match status" value="1"/>
</dbReference>
<dbReference type="PIRSF" id="PIRSF001109">
    <property type="entry name" value="Ad_hcy_hydrolase"/>
    <property type="match status" value="1"/>
</dbReference>
<dbReference type="SMART" id="SM00996">
    <property type="entry name" value="AdoHcyase"/>
    <property type="match status" value="1"/>
</dbReference>
<dbReference type="SMART" id="SM00997">
    <property type="entry name" value="AdoHcyase_NAD"/>
    <property type="match status" value="1"/>
</dbReference>
<dbReference type="SUPFAM" id="SSF52283">
    <property type="entry name" value="Formate/glycerate dehydrogenase catalytic domain-like"/>
    <property type="match status" value="1"/>
</dbReference>
<dbReference type="SUPFAM" id="SSF51735">
    <property type="entry name" value="NAD(P)-binding Rossmann-fold domains"/>
    <property type="match status" value="1"/>
</dbReference>
<dbReference type="PROSITE" id="PS00738">
    <property type="entry name" value="ADOHCYASE_1"/>
    <property type="match status" value="1"/>
</dbReference>
<dbReference type="PROSITE" id="PS00739">
    <property type="entry name" value="ADOHCYASE_2"/>
    <property type="match status" value="1"/>
</dbReference>
<accession>O27673</accession>
<name>SIHH_METTH</name>
<reference key="1">
    <citation type="journal article" date="1997" name="J. Bacteriol.">
        <title>Complete genome sequence of Methanobacterium thermoautotrophicum deltaH: functional analysis and comparative genomics.</title>
        <authorList>
            <person name="Smith D.R."/>
            <person name="Doucette-Stamm L.A."/>
            <person name="Deloughery C."/>
            <person name="Lee H.-M."/>
            <person name="Dubois J."/>
            <person name="Aldredge T."/>
            <person name="Bashirzadeh R."/>
            <person name="Blakely D."/>
            <person name="Cook R."/>
            <person name="Gilbert K."/>
            <person name="Harrison D."/>
            <person name="Hoang L."/>
            <person name="Keagle P."/>
            <person name="Lumm W."/>
            <person name="Pothier B."/>
            <person name="Qiu D."/>
            <person name="Spadafora R."/>
            <person name="Vicare R."/>
            <person name="Wang Y."/>
            <person name="Wierzbowski J."/>
            <person name="Gibson R."/>
            <person name="Jiwani N."/>
            <person name="Caruso A."/>
            <person name="Bush D."/>
            <person name="Safer H."/>
            <person name="Patwell D."/>
            <person name="Prabhakar S."/>
            <person name="McDougall S."/>
            <person name="Shimer G."/>
            <person name="Goyal A."/>
            <person name="Pietrovski S."/>
            <person name="Church G.M."/>
            <person name="Daniels C.J."/>
            <person name="Mao J.-I."/>
            <person name="Rice P."/>
            <person name="Noelling J."/>
            <person name="Reeve J.N."/>
        </authorList>
    </citation>
    <scope>NUCLEOTIDE SEQUENCE [LARGE SCALE GENOMIC DNA]</scope>
    <source>
        <strain>ATCC 29096 / DSM 1053 / JCM 10044 / NBRC 100330 / Delta H</strain>
    </source>
</reference>
<comment type="function">
    <text evidence="1">Catalyzes the hydrolysis of S-inosyl-L-homocysteine (SIH) to L-homocysteine (Hcy) and inosine. Likely functions in a S-adenosyl-L-methionine (SAM) recycling pathway from S-adenosyl-L-homocysteine (SAH) produced from SAM-dependent methylation reactions. Can also catalyze the reverse reaction in vitro, i.e. the synthesis of SIH from Hcy and inosine.</text>
</comment>
<comment type="catalytic activity">
    <reaction evidence="1">
        <text>S-inosyl-L-homocysteine + H2O = L-homocysteine + inosine</text>
        <dbReference type="Rhea" id="RHEA:59828"/>
        <dbReference type="ChEBI" id="CHEBI:15377"/>
        <dbReference type="ChEBI" id="CHEBI:17596"/>
        <dbReference type="ChEBI" id="CHEBI:57985"/>
        <dbReference type="ChEBI" id="CHEBI:58199"/>
        <dbReference type="EC" id="3.13.1.9"/>
    </reaction>
    <physiologicalReaction direction="left-to-right" evidence="1">
        <dbReference type="Rhea" id="RHEA:59829"/>
    </physiologicalReaction>
</comment>
<comment type="cofactor">
    <cofactor evidence="1">
        <name>NAD(+)</name>
        <dbReference type="ChEBI" id="CHEBI:57540"/>
    </cofactor>
    <text evidence="1">Binds 1 NAD(+) per subunit.</text>
</comment>
<comment type="pathway">
    <text evidence="1">Amino-acid biosynthesis; S-adenosyl-L-methionine biosynthesis.</text>
</comment>
<comment type="subcellular location">
    <subcellularLocation>
        <location evidence="1">Cytoplasm</location>
    </subcellularLocation>
</comment>
<comment type="miscellaneous">
    <text evidence="1">SAH is a product of SAM methyltransferases and is known to be a feedback inhibitor of these enzymes. As a result of this inhibition, organisms have evolved efficient enzymes to metabolize SAH via different pathways. The pathway found in methanogens differs from the canonical pathway, it uses the deamination of S-adenosyl-L-homocysteine to form S-inosyl-L-homocysteine for the regeneration of SAM from S-adenosyl-L-homocysteine.</text>
</comment>
<comment type="similarity">
    <text evidence="1">Belongs to the adenosylhomocysteinase family.</text>
</comment>
<feature type="chain" id="PRO_0000117008" description="S-inosyl-L-homocysteine hydrolase">
    <location>
        <begin position="1"/>
        <end position="417"/>
    </location>
</feature>
<feature type="binding site" evidence="1">
    <location>
        <position position="124"/>
    </location>
    <ligand>
        <name>substrate</name>
    </ligand>
</feature>
<feature type="binding site" evidence="1">
    <location>
        <position position="149"/>
    </location>
    <ligand>
        <name>substrate</name>
    </ligand>
</feature>
<feature type="binding site" evidence="1">
    <location>
        <begin position="150"/>
        <end position="152"/>
    </location>
    <ligand>
        <name>NAD(+)</name>
        <dbReference type="ChEBI" id="CHEBI:57540"/>
    </ligand>
</feature>
<feature type="binding site" evidence="1">
    <location>
        <position position="179"/>
    </location>
    <ligand>
        <name>substrate</name>
    </ligand>
</feature>
<feature type="binding site" evidence="1">
    <location>
        <position position="183"/>
    </location>
    <ligand>
        <name>substrate</name>
    </ligand>
</feature>
<feature type="binding site" evidence="1">
    <location>
        <position position="184"/>
    </location>
    <ligand>
        <name>NAD(+)</name>
        <dbReference type="ChEBI" id="CHEBI:57540"/>
    </ligand>
</feature>
<feature type="binding site" evidence="1">
    <location>
        <begin position="213"/>
        <end position="218"/>
    </location>
    <ligand>
        <name>NAD(+)</name>
        <dbReference type="ChEBI" id="CHEBI:57540"/>
    </ligand>
</feature>
<feature type="binding site" evidence="1">
    <location>
        <position position="236"/>
    </location>
    <ligand>
        <name>NAD(+)</name>
        <dbReference type="ChEBI" id="CHEBI:57540"/>
    </ligand>
</feature>
<feature type="binding site" evidence="1">
    <location>
        <position position="271"/>
    </location>
    <ligand>
        <name>NAD(+)</name>
        <dbReference type="ChEBI" id="CHEBI:57540"/>
    </ligand>
</feature>
<feature type="binding site" evidence="1">
    <location>
        <begin position="292"/>
        <end position="294"/>
    </location>
    <ligand>
        <name>NAD(+)</name>
        <dbReference type="ChEBI" id="CHEBI:57540"/>
    </ligand>
</feature>
<feature type="binding site" evidence="1">
    <location>
        <position position="339"/>
    </location>
    <ligand>
        <name>NAD(+)</name>
        <dbReference type="ChEBI" id="CHEBI:57540"/>
    </ligand>
</feature>
<organism>
    <name type="scientific">Methanothermobacter thermautotrophicus (strain ATCC 29096 / DSM 1053 / JCM 10044 / NBRC 100330 / Delta H)</name>
    <name type="common">Methanobacterium thermoautotrophicum</name>
    <dbReference type="NCBI Taxonomy" id="187420"/>
    <lineage>
        <taxon>Archaea</taxon>
        <taxon>Methanobacteriati</taxon>
        <taxon>Methanobacteriota</taxon>
        <taxon>Methanomada group</taxon>
        <taxon>Methanobacteria</taxon>
        <taxon>Methanobacteriales</taxon>
        <taxon>Methanobacteriaceae</taxon>
        <taxon>Methanothermobacter</taxon>
    </lineage>
</organism>